<evidence type="ECO:0000255" key="1">
    <source>
        <dbReference type="HAMAP-Rule" id="MF_00060"/>
    </source>
</evidence>
<name>SURE_NITOC</name>
<protein>
    <recommendedName>
        <fullName evidence="1">5'-nucleotidase SurE</fullName>
        <ecNumber evidence="1">3.1.3.5</ecNumber>
    </recommendedName>
    <alternativeName>
        <fullName evidence="1">Nucleoside 5'-monophosphate phosphohydrolase</fullName>
    </alternativeName>
</protein>
<feature type="chain" id="PRO_0000235629" description="5'-nucleotidase SurE">
    <location>
        <begin position="1"/>
        <end position="251"/>
    </location>
</feature>
<feature type="binding site" evidence="1">
    <location>
        <position position="8"/>
    </location>
    <ligand>
        <name>a divalent metal cation</name>
        <dbReference type="ChEBI" id="CHEBI:60240"/>
    </ligand>
</feature>
<feature type="binding site" evidence="1">
    <location>
        <position position="9"/>
    </location>
    <ligand>
        <name>a divalent metal cation</name>
        <dbReference type="ChEBI" id="CHEBI:60240"/>
    </ligand>
</feature>
<feature type="binding site" evidence="1">
    <location>
        <position position="39"/>
    </location>
    <ligand>
        <name>a divalent metal cation</name>
        <dbReference type="ChEBI" id="CHEBI:60240"/>
    </ligand>
</feature>
<feature type="binding site" evidence="1">
    <location>
        <position position="91"/>
    </location>
    <ligand>
        <name>a divalent metal cation</name>
        <dbReference type="ChEBI" id="CHEBI:60240"/>
    </ligand>
</feature>
<proteinExistence type="inferred from homology"/>
<accession>Q3JCZ4</accession>
<dbReference type="EC" id="3.1.3.5" evidence="1"/>
<dbReference type="EMBL" id="CP000127">
    <property type="protein sequence ID" value="ABA57302.1"/>
    <property type="molecule type" value="Genomic_DNA"/>
</dbReference>
<dbReference type="RefSeq" id="WP_002810437.1">
    <property type="nucleotide sequence ID" value="NC_007484.1"/>
</dbReference>
<dbReference type="SMR" id="Q3JCZ4"/>
<dbReference type="FunCoup" id="Q3JCZ4">
    <property type="interactions" value="198"/>
</dbReference>
<dbReference type="STRING" id="323261.Noc_0789"/>
<dbReference type="KEGG" id="noc:Noc_0789"/>
<dbReference type="eggNOG" id="COG0496">
    <property type="taxonomic scope" value="Bacteria"/>
</dbReference>
<dbReference type="HOGENOM" id="CLU_045192_1_2_6"/>
<dbReference type="InParanoid" id="Q3JCZ4"/>
<dbReference type="Proteomes" id="UP000006838">
    <property type="component" value="Chromosome"/>
</dbReference>
<dbReference type="GO" id="GO:0005737">
    <property type="term" value="C:cytoplasm"/>
    <property type="evidence" value="ECO:0007669"/>
    <property type="project" value="UniProtKB-SubCell"/>
</dbReference>
<dbReference type="GO" id="GO:0008254">
    <property type="term" value="F:3'-nucleotidase activity"/>
    <property type="evidence" value="ECO:0007669"/>
    <property type="project" value="TreeGrafter"/>
</dbReference>
<dbReference type="GO" id="GO:0008253">
    <property type="term" value="F:5'-nucleotidase activity"/>
    <property type="evidence" value="ECO:0007669"/>
    <property type="project" value="UniProtKB-UniRule"/>
</dbReference>
<dbReference type="GO" id="GO:0004309">
    <property type="term" value="F:exopolyphosphatase activity"/>
    <property type="evidence" value="ECO:0007669"/>
    <property type="project" value="TreeGrafter"/>
</dbReference>
<dbReference type="GO" id="GO:0046872">
    <property type="term" value="F:metal ion binding"/>
    <property type="evidence" value="ECO:0007669"/>
    <property type="project" value="UniProtKB-UniRule"/>
</dbReference>
<dbReference type="GO" id="GO:0000166">
    <property type="term" value="F:nucleotide binding"/>
    <property type="evidence" value="ECO:0007669"/>
    <property type="project" value="UniProtKB-KW"/>
</dbReference>
<dbReference type="FunFam" id="3.40.1210.10:FF:000001">
    <property type="entry name" value="5'/3'-nucleotidase SurE"/>
    <property type="match status" value="1"/>
</dbReference>
<dbReference type="Gene3D" id="3.40.1210.10">
    <property type="entry name" value="Survival protein SurE-like phosphatase/nucleotidase"/>
    <property type="match status" value="1"/>
</dbReference>
<dbReference type="HAMAP" id="MF_00060">
    <property type="entry name" value="SurE"/>
    <property type="match status" value="1"/>
</dbReference>
<dbReference type="InterPro" id="IPR030048">
    <property type="entry name" value="SurE"/>
</dbReference>
<dbReference type="InterPro" id="IPR002828">
    <property type="entry name" value="SurE-like_Pase/nucleotidase"/>
</dbReference>
<dbReference type="InterPro" id="IPR036523">
    <property type="entry name" value="SurE-like_sf"/>
</dbReference>
<dbReference type="NCBIfam" id="NF001489">
    <property type="entry name" value="PRK00346.1-3"/>
    <property type="match status" value="1"/>
</dbReference>
<dbReference type="NCBIfam" id="NF001490">
    <property type="entry name" value="PRK00346.1-4"/>
    <property type="match status" value="1"/>
</dbReference>
<dbReference type="NCBIfam" id="TIGR00087">
    <property type="entry name" value="surE"/>
    <property type="match status" value="1"/>
</dbReference>
<dbReference type="PANTHER" id="PTHR30457">
    <property type="entry name" value="5'-NUCLEOTIDASE SURE"/>
    <property type="match status" value="1"/>
</dbReference>
<dbReference type="PANTHER" id="PTHR30457:SF12">
    <property type="entry name" value="5'_3'-NUCLEOTIDASE SURE"/>
    <property type="match status" value="1"/>
</dbReference>
<dbReference type="Pfam" id="PF01975">
    <property type="entry name" value="SurE"/>
    <property type="match status" value="1"/>
</dbReference>
<dbReference type="SUPFAM" id="SSF64167">
    <property type="entry name" value="SurE-like"/>
    <property type="match status" value="1"/>
</dbReference>
<reference key="1">
    <citation type="journal article" date="2006" name="Appl. Environ. Microbiol.">
        <title>Complete genome sequence of the marine, chemolithoautotrophic, ammonia-oxidizing bacterium Nitrosococcus oceani ATCC 19707.</title>
        <authorList>
            <person name="Klotz M.G."/>
            <person name="Arp D.J."/>
            <person name="Chain P.S.G."/>
            <person name="El-Sheikh A.F."/>
            <person name="Hauser L.J."/>
            <person name="Hommes N.G."/>
            <person name="Larimer F.W."/>
            <person name="Malfatti S.A."/>
            <person name="Norton J.M."/>
            <person name="Poret-Peterson A.T."/>
            <person name="Vergez L.M."/>
            <person name="Ward B.B."/>
        </authorList>
    </citation>
    <scope>NUCLEOTIDE SEQUENCE [LARGE SCALE GENOMIC DNA]</scope>
    <source>
        <strain>ATCC 19707 / BCRC 17464 / JCM 30415 / NCIMB 11848 / C-107</strain>
    </source>
</reference>
<organism>
    <name type="scientific">Nitrosococcus oceani (strain ATCC 19707 / BCRC 17464 / JCM 30415 / NCIMB 11848 / C-107)</name>
    <dbReference type="NCBI Taxonomy" id="323261"/>
    <lineage>
        <taxon>Bacteria</taxon>
        <taxon>Pseudomonadati</taxon>
        <taxon>Pseudomonadota</taxon>
        <taxon>Gammaproteobacteria</taxon>
        <taxon>Chromatiales</taxon>
        <taxon>Chromatiaceae</taxon>
        <taxon>Nitrosococcus</taxon>
    </lineage>
</organism>
<comment type="function">
    <text evidence="1">Nucleotidase that shows phosphatase activity on nucleoside 5'-monophosphates.</text>
</comment>
<comment type="catalytic activity">
    <reaction evidence="1">
        <text>a ribonucleoside 5'-phosphate + H2O = a ribonucleoside + phosphate</text>
        <dbReference type="Rhea" id="RHEA:12484"/>
        <dbReference type="ChEBI" id="CHEBI:15377"/>
        <dbReference type="ChEBI" id="CHEBI:18254"/>
        <dbReference type="ChEBI" id="CHEBI:43474"/>
        <dbReference type="ChEBI" id="CHEBI:58043"/>
        <dbReference type="EC" id="3.1.3.5"/>
    </reaction>
</comment>
<comment type="cofactor">
    <cofactor evidence="1">
        <name>a divalent metal cation</name>
        <dbReference type="ChEBI" id="CHEBI:60240"/>
    </cofactor>
    <text evidence="1">Binds 1 divalent metal cation per subunit.</text>
</comment>
<comment type="subcellular location">
    <subcellularLocation>
        <location evidence="1">Cytoplasm</location>
    </subcellularLocation>
</comment>
<comment type="similarity">
    <text evidence="1">Belongs to the SurE nucleotidase family.</text>
</comment>
<keyword id="KW-0963">Cytoplasm</keyword>
<keyword id="KW-0378">Hydrolase</keyword>
<keyword id="KW-0479">Metal-binding</keyword>
<keyword id="KW-0547">Nucleotide-binding</keyword>
<keyword id="KW-1185">Reference proteome</keyword>
<sequence length="251" mass="26936">MRILVSNDDGYLAPGIRVLADCLAKIAEVIVVAPDRDRSGASHSLTLDTPLRATLGENGFYRVEGTPTDCVHLGITGLLEKEPDMVVSGVNWGANLGDDVIYSGTVAAAMEGRFLGLPAIAVSLASAEPEHFDTAAWVARRLVTSLMEDPLPADTILNVNVPNLPRTQITDFEATRLGHRHRSEPVIKDADPRGRPIYWVGPAGESQDAGPGTDFHAIARGSVSITPIQVDLTRYAALDQVAGWLQRIPRS</sequence>
<gene>
    <name evidence="1" type="primary">surE</name>
    <name type="ordered locus">Noc_0789</name>
</gene>